<gene>
    <name evidence="1" type="primary">lspA</name>
    <name type="ordered locus">BU148</name>
</gene>
<accession>P57248</accession>
<reference key="1">
    <citation type="journal article" date="2000" name="Nature">
        <title>Genome sequence of the endocellular bacterial symbiont of aphids Buchnera sp. APS.</title>
        <authorList>
            <person name="Shigenobu S."/>
            <person name="Watanabe H."/>
            <person name="Hattori M."/>
            <person name="Sakaki Y."/>
            <person name="Ishikawa H."/>
        </authorList>
    </citation>
    <scope>NUCLEOTIDE SEQUENCE [LARGE SCALE GENOMIC DNA]</scope>
    <source>
        <strain>APS</strain>
    </source>
</reference>
<feature type="chain" id="PRO_0000178771" description="Lipoprotein signal peptidase">
    <location>
        <begin position="1"/>
        <end position="160"/>
    </location>
</feature>
<feature type="transmembrane region" description="Helical" evidence="1">
    <location>
        <begin position="13"/>
        <end position="33"/>
    </location>
</feature>
<feature type="transmembrane region" description="Helical" evidence="1">
    <location>
        <begin position="72"/>
        <end position="92"/>
    </location>
</feature>
<feature type="transmembrane region" description="Helical" evidence="1">
    <location>
        <begin position="104"/>
        <end position="124"/>
    </location>
</feature>
<feature type="transmembrane region" description="Helical" evidence="1">
    <location>
        <begin position="134"/>
        <end position="154"/>
    </location>
</feature>
<feature type="active site" evidence="1">
    <location>
        <position position="125"/>
    </location>
</feature>
<feature type="active site" evidence="1">
    <location>
        <position position="143"/>
    </location>
</feature>
<protein>
    <recommendedName>
        <fullName evidence="1">Lipoprotein signal peptidase</fullName>
        <ecNumber evidence="1">3.4.23.36</ecNumber>
    </recommendedName>
    <alternativeName>
        <fullName evidence="1">Prolipoprotein signal peptidase</fullName>
    </alternativeName>
    <alternativeName>
        <fullName evidence="1">Signal peptidase II</fullName>
        <shortName evidence="1">SPase II</shortName>
    </alternativeName>
</protein>
<name>LSPA_BUCAI</name>
<proteinExistence type="inferred from homology"/>
<evidence type="ECO:0000255" key="1">
    <source>
        <dbReference type="HAMAP-Rule" id="MF_00161"/>
    </source>
</evidence>
<evidence type="ECO:0000305" key="2"/>
<keyword id="KW-0064">Aspartyl protease</keyword>
<keyword id="KW-0997">Cell inner membrane</keyword>
<keyword id="KW-1003">Cell membrane</keyword>
<keyword id="KW-0378">Hydrolase</keyword>
<keyword id="KW-0472">Membrane</keyword>
<keyword id="KW-0645">Protease</keyword>
<keyword id="KW-1185">Reference proteome</keyword>
<keyword id="KW-0812">Transmembrane</keyword>
<keyword id="KW-1133">Transmembrane helix</keyword>
<comment type="function">
    <text evidence="1">This protein specifically catalyzes the removal of signal peptides from prolipoproteins.</text>
</comment>
<comment type="catalytic activity">
    <reaction evidence="1">
        <text>Release of signal peptides from bacterial membrane prolipoproteins. Hydrolyzes -Xaa-Yaa-Zaa-|-(S,diacylglyceryl)Cys-, in which Xaa is hydrophobic (preferably Leu), and Yaa (Ala or Ser) and Zaa (Gly or Ala) have small, neutral side chains.</text>
        <dbReference type="EC" id="3.4.23.36"/>
    </reaction>
</comment>
<comment type="pathway">
    <text evidence="1">Protein modification; lipoprotein biosynthesis (signal peptide cleavage).</text>
</comment>
<comment type="subcellular location">
    <subcellularLocation>
        <location evidence="1">Cell inner membrane</location>
        <topology evidence="1">Multi-pass membrane protein</topology>
    </subcellularLocation>
</comment>
<comment type="similarity">
    <text evidence="1 2">Belongs to the peptidase A8 family.</text>
</comment>
<organism>
    <name type="scientific">Buchnera aphidicola subsp. Acyrthosiphon pisum (strain APS)</name>
    <name type="common">Acyrthosiphon pisum symbiotic bacterium</name>
    <dbReference type="NCBI Taxonomy" id="107806"/>
    <lineage>
        <taxon>Bacteria</taxon>
        <taxon>Pseudomonadati</taxon>
        <taxon>Pseudomonadota</taxon>
        <taxon>Gammaproteobacteria</taxon>
        <taxon>Enterobacterales</taxon>
        <taxon>Erwiniaceae</taxon>
        <taxon>Buchnera</taxon>
    </lineage>
</organism>
<sequence length="160" mass="18712">MKQKYSKKSKKWIYITTIIFILILDISSKRLIIKYIKTYDTKKIFSVLNFFHVHNHGAAFSFLSDQNGWQKWFLSTVSILTILVMTRIITKLKKQETKKITAYSLIIAGATGNLIDRIFYGFVVDFIDIHINDWHFATFNIADCSIFIGIIILMRINYST</sequence>
<dbReference type="EC" id="3.4.23.36" evidence="1"/>
<dbReference type="EMBL" id="BA000003">
    <property type="protein sequence ID" value="BAB12866.1"/>
    <property type="molecule type" value="Genomic_DNA"/>
</dbReference>
<dbReference type="RefSeq" id="NP_239980.1">
    <property type="nucleotide sequence ID" value="NC_002528.1"/>
</dbReference>
<dbReference type="RefSeq" id="WP_010895973.1">
    <property type="nucleotide sequence ID" value="NZ_AP036055.1"/>
</dbReference>
<dbReference type="SMR" id="P57248"/>
<dbReference type="STRING" id="563178.BUAP5A_146"/>
<dbReference type="EnsemblBacteria" id="BAB12866">
    <property type="protein sequence ID" value="BAB12866"/>
    <property type="gene ID" value="BAB12866"/>
</dbReference>
<dbReference type="KEGG" id="buc:BU148"/>
<dbReference type="PATRIC" id="fig|107806.10.peg.157"/>
<dbReference type="eggNOG" id="COG0597">
    <property type="taxonomic scope" value="Bacteria"/>
</dbReference>
<dbReference type="HOGENOM" id="CLU_083252_4_0_6"/>
<dbReference type="UniPathway" id="UPA00665"/>
<dbReference type="Proteomes" id="UP000001806">
    <property type="component" value="Chromosome"/>
</dbReference>
<dbReference type="GO" id="GO:0005886">
    <property type="term" value="C:plasma membrane"/>
    <property type="evidence" value="ECO:0007669"/>
    <property type="project" value="UniProtKB-SubCell"/>
</dbReference>
<dbReference type="GO" id="GO:0004190">
    <property type="term" value="F:aspartic-type endopeptidase activity"/>
    <property type="evidence" value="ECO:0007669"/>
    <property type="project" value="UniProtKB-UniRule"/>
</dbReference>
<dbReference type="GO" id="GO:0006508">
    <property type="term" value="P:proteolysis"/>
    <property type="evidence" value="ECO:0007669"/>
    <property type="project" value="UniProtKB-KW"/>
</dbReference>
<dbReference type="HAMAP" id="MF_00161">
    <property type="entry name" value="LspA"/>
    <property type="match status" value="1"/>
</dbReference>
<dbReference type="InterPro" id="IPR001872">
    <property type="entry name" value="Peptidase_A8"/>
</dbReference>
<dbReference type="NCBIfam" id="TIGR00077">
    <property type="entry name" value="lspA"/>
    <property type="match status" value="1"/>
</dbReference>
<dbReference type="PANTHER" id="PTHR33695">
    <property type="entry name" value="LIPOPROTEIN SIGNAL PEPTIDASE"/>
    <property type="match status" value="1"/>
</dbReference>
<dbReference type="PANTHER" id="PTHR33695:SF1">
    <property type="entry name" value="LIPOPROTEIN SIGNAL PEPTIDASE"/>
    <property type="match status" value="1"/>
</dbReference>
<dbReference type="Pfam" id="PF01252">
    <property type="entry name" value="Peptidase_A8"/>
    <property type="match status" value="1"/>
</dbReference>
<dbReference type="PRINTS" id="PR00781">
    <property type="entry name" value="LIPOSIGPTASE"/>
</dbReference>
<dbReference type="PROSITE" id="PS00855">
    <property type="entry name" value="SPASE_II"/>
    <property type="match status" value="1"/>
</dbReference>